<comment type="catalytic activity">
    <reaction evidence="1">
        <text>CMP + ATP = CDP + ADP</text>
        <dbReference type="Rhea" id="RHEA:11600"/>
        <dbReference type="ChEBI" id="CHEBI:30616"/>
        <dbReference type="ChEBI" id="CHEBI:58069"/>
        <dbReference type="ChEBI" id="CHEBI:60377"/>
        <dbReference type="ChEBI" id="CHEBI:456216"/>
        <dbReference type="EC" id="2.7.4.25"/>
    </reaction>
</comment>
<comment type="catalytic activity">
    <reaction evidence="1">
        <text>dCMP + ATP = dCDP + ADP</text>
        <dbReference type="Rhea" id="RHEA:25094"/>
        <dbReference type="ChEBI" id="CHEBI:30616"/>
        <dbReference type="ChEBI" id="CHEBI:57566"/>
        <dbReference type="ChEBI" id="CHEBI:58593"/>
        <dbReference type="ChEBI" id="CHEBI:456216"/>
        <dbReference type="EC" id="2.7.4.25"/>
    </reaction>
</comment>
<comment type="subcellular location">
    <subcellularLocation>
        <location evidence="1">Cytoplasm</location>
    </subcellularLocation>
</comment>
<comment type="similarity">
    <text evidence="1">Belongs to the cytidylate kinase family. Type 1 subfamily.</text>
</comment>
<keyword id="KW-0067">ATP-binding</keyword>
<keyword id="KW-0963">Cytoplasm</keyword>
<keyword id="KW-0418">Kinase</keyword>
<keyword id="KW-0547">Nucleotide-binding</keyword>
<keyword id="KW-0808">Transferase</keyword>
<sequence>MKAIKIAIDGPASSGKSTVAKIIAKNLGYTYLDTGAMYRSATYIALTHGYTGKEVALILEELEKNPISFKKAKDGSQLVFLGDEDVTLAIRQNDVTNNVSWVSALPEIREELVHQQRRIAQAGGIIMDGRDIGTVVLPDAELKIFLVASVEERAERRYKENLEKGIESDFETLKEEIAARDYKDSHRKVSPLKAAEDALIFDTTGVSIDGVVQFIQEKAEKIVDMS</sequence>
<name>KCY_STRPZ</name>
<reference key="1">
    <citation type="journal article" date="2008" name="J. Bacteriol.">
        <title>Genome sequence of a nephritogenic and highly transformable M49 strain of Streptococcus pyogenes.</title>
        <authorList>
            <person name="McShan W.M."/>
            <person name="Ferretti J.J."/>
            <person name="Karasawa T."/>
            <person name="Suvorov A.N."/>
            <person name="Lin S."/>
            <person name="Qin B."/>
            <person name="Jia H."/>
            <person name="Kenton S."/>
            <person name="Najar F."/>
            <person name="Wu H."/>
            <person name="Scott J."/>
            <person name="Roe B.A."/>
            <person name="Savic D.J."/>
        </authorList>
    </citation>
    <scope>NUCLEOTIDE SEQUENCE [LARGE SCALE GENOMIC DNA]</scope>
    <source>
        <strain>NZ131</strain>
    </source>
</reference>
<feature type="chain" id="PRO_1000100696" description="Cytidylate kinase">
    <location>
        <begin position="1"/>
        <end position="226"/>
    </location>
</feature>
<feature type="binding site" evidence="1">
    <location>
        <begin position="10"/>
        <end position="18"/>
    </location>
    <ligand>
        <name>ATP</name>
        <dbReference type="ChEBI" id="CHEBI:30616"/>
    </ligand>
</feature>
<protein>
    <recommendedName>
        <fullName evidence="1">Cytidylate kinase</fullName>
        <shortName evidence="1">CK</shortName>
        <ecNumber evidence="1">2.7.4.25</ecNumber>
    </recommendedName>
    <alternativeName>
        <fullName evidence="1">Cytidine monophosphate kinase</fullName>
        <shortName evidence="1">CMP kinase</shortName>
    </alternativeName>
</protein>
<gene>
    <name evidence="1" type="primary">cmk</name>
    <name type="ordered locus">Spy49_0628</name>
</gene>
<dbReference type="EC" id="2.7.4.25" evidence="1"/>
<dbReference type="EMBL" id="CP000829">
    <property type="protein sequence ID" value="ACI60949.1"/>
    <property type="molecule type" value="Genomic_DNA"/>
</dbReference>
<dbReference type="SMR" id="B5XKT7"/>
<dbReference type="KEGG" id="soz:Spy49_0628"/>
<dbReference type="HOGENOM" id="CLU_079959_0_2_9"/>
<dbReference type="Proteomes" id="UP000001039">
    <property type="component" value="Chromosome"/>
</dbReference>
<dbReference type="GO" id="GO:0005829">
    <property type="term" value="C:cytosol"/>
    <property type="evidence" value="ECO:0007669"/>
    <property type="project" value="TreeGrafter"/>
</dbReference>
<dbReference type="GO" id="GO:0005524">
    <property type="term" value="F:ATP binding"/>
    <property type="evidence" value="ECO:0007669"/>
    <property type="project" value="UniProtKB-UniRule"/>
</dbReference>
<dbReference type="GO" id="GO:0036430">
    <property type="term" value="F:CMP kinase activity"/>
    <property type="evidence" value="ECO:0007669"/>
    <property type="project" value="RHEA"/>
</dbReference>
<dbReference type="GO" id="GO:0036431">
    <property type="term" value="F:dCMP kinase activity"/>
    <property type="evidence" value="ECO:0007669"/>
    <property type="project" value="RHEA"/>
</dbReference>
<dbReference type="GO" id="GO:0015949">
    <property type="term" value="P:nucleobase-containing small molecule interconversion"/>
    <property type="evidence" value="ECO:0007669"/>
    <property type="project" value="TreeGrafter"/>
</dbReference>
<dbReference type="GO" id="GO:0006220">
    <property type="term" value="P:pyrimidine nucleotide metabolic process"/>
    <property type="evidence" value="ECO:0007669"/>
    <property type="project" value="UniProtKB-UniRule"/>
</dbReference>
<dbReference type="CDD" id="cd02020">
    <property type="entry name" value="CMPK"/>
    <property type="match status" value="1"/>
</dbReference>
<dbReference type="FunFam" id="3.40.50.300:FF:000484">
    <property type="entry name" value="Cytidylate kinase"/>
    <property type="match status" value="1"/>
</dbReference>
<dbReference type="Gene3D" id="3.40.50.300">
    <property type="entry name" value="P-loop containing nucleotide triphosphate hydrolases"/>
    <property type="match status" value="1"/>
</dbReference>
<dbReference type="HAMAP" id="MF_00238">
    <property type="entry name" value="Cytidyl_kinase_type1"/>
    <property type="match status" value="1"/>
</dbReference>
<dbReference type="InterPro" id="IPR003136">
    <property type="entry name" value="Cytidylate_kin"/>
</dbReference>
<dbReference type="InterPro" id="IPR011994">
    <property type="entry name" value="Cytidylate_kinase_dom"/>
</dbReference>
<dbReference type="InterPro" id="IPR027417">
    <property type="entry name" value="P-loop_NTPase"/>
</dbReference>
<dbReference type="NCBIfam" id="TIGR00017">
    <property type="entry name" value="cmk"/>
    <property type="match status" value="1"/>
</dbReference>
<dbReference type="PANTHER" id="PTHR21299:SF2">
    <property type="entry name" value="CYTIDYLATE KINASE"/>
    <property type="match status" value="1"/>
</dbReference>
<dbReference type="PANTHER" id="PTHR21299">
    <property type="entry name" value="CYTIDYLATE KINASE/PANTOATE-BETA-ALANINE LIGASE"/>
    <property type="match status" value="1"/>
</dbReference>
<dbReference type="Pfam" id="PF02224">
    <property type="entry name" value="Cytidylate_kin"/>
    <property type="match status" value="1"/>
</dbReference>
<dbReference type="SUPFAM" id="SSF52540">
    <property type="entry name" value="P-loop containing nucleoside triphosphate hydrolases"/>
    <property type="match status" value="1"/>
</dbReference>
<proteinExistence type="inferred from homology"/>
<accession>B5XKT7</accession>
<evidence type="ECO:0000255" key="1">
    <source>
        <dbReference type="HAMAP-Rule" id="MF_00238"/>
    </source>
</evidence>
<organism>
    <name type="scientific">Streptococcus pyogenes serotype M49 (strain NZ131)</name>
    <dbReference type="NCBI Taxonomy" id="471876"/>
    <lineage>
        <taxon>Bacteria</taxon>
        <taxon>Bacillati</taxon>
        <taxon>Bacillota</taxon>
        <taxon>Bacilli</taxon>
        <taxon>Lactobacillales</taxon>
        <taxon>Streptococcaceae</taxon>
        <taxon>Streptococcus</taxon>
    </lineage>
</organism>